<feature type="chain" id="PRO_0000170497" description="Guanylate kinase">
    <location>
        <begin position="1"/>
        <end position="205"/>
    </location>
</feature>
<feature type="domain" description="Guanylate kinase-like" evidence="1">
    <location>
        <begin position="6"/>
        <end position="184"/>
    </location>
</feature>
<feature type="binding site" evidence="1">
    <location>
        <begin position="13"/>
        <end position="20"/>
    </location>
    <ligand>
        <name>ATP</name>
        <dbReference type="ChEBI" id="CHEBI:30616"/>
    </ligand>
</feature>
<gene>
    <name evidence="1" type="primary">gmk</name>
    <name type="ordered locus">ABC2322</name>
</gene>
<dbReference type="EC" id="2.7.4.8" evidence="1"/>
<dbReference type="EMBL" id="AP006627">
    <property type="protein sequence ID" value="BAD64857.1"/>
    <property type="molecule type" value="Genomic_DNA"/>
</dbReference>
<dbReference type="RefSeq" id="WP_011247165.1">
    <property type="nucleotide sequence ID" value="NC_006582.1"/>
</dbReference>
<dbReference type="SMR" id="Q5WFK3"/>
<dbReference type="STRING" id="66692.ABC2322"/>
<dbReference type="KEGG" id="bcl:ABC2322"/>
<dbReference type="eggNOG" id="COG0194">
    <property type="taxonomic scope" value="Bacteria"/>
</dbReference>
<dbReference type="HOGENOM" id="CLU_001715_1_2_9"/>
<dbReference type="OrthoDB" id="9808150at2"/>
<dbReference type="Proteomes" id="UP000001168">
    <property type="component" value="Chromosome"/>
</dbReference>
<dbReference type="GO" id="GO:0005829">
    <property type="term" value="C:cytosol"/>
    <property type="evidence" value="ECO:0007669"/>
    <property type="project" value="TreeGrafter"/>
</dbReference>
<dbReference type="GO" id="GO:0005524">
    <property type="term" value="F:ATP binding"/>
    <property type="evidence" value="ECO:0007669"/>
    <property type="project" value="UniProtKB-UniRule"/>
</dbReference>
<dbReference type="GO" id="GO:0004385">
    <property type="term" value="F:guanylate kinase activity"/>
    <property type="evidence" value="ECO:0007669"/>
    <property type="project" value="UniProtKB-UniRule"/>
</dbReference>
<dbReference type="CDD" id="cd00071">
    <property type="entry name" value="GMPK"/>
    <property type="match status" value="1"/>
</dbReference>
<dbReference type="FunFam" id="3.40.50.300:FF:000855">
    <property type="entry name" value="Guanylate kinase"/>
    <property type="match status" value="1"/>
</dbReference>
<dbReference type="FunFam" id="3.30.63.10:FF:000002">
    <property type="entry name" value="Guanylate kinase 1"/>
    <property type="match status" value="1"/>
</dbReference>
<dbReference type="Gene3D" id="3.30.63.10">
    <property type="entry name" value="Guanylate Kinase phosphate binding domain"/>
    <property type="match status" value="1"/>
</dbReference>
<dbReference type="Gene3D" id="3.40.50.300">
    <property type="entry name" value="P-loop containing nucleotide triphosphate hydrolases"/>
    <property type="match status" value="1"/>
</dbReference>
<dbReference type="HAMAP" id="MF_00328">
    <property type="entry name" value="Guanylate_kinase"/>
    <property type="match status" value="1"/>
</dbReference>
<dbReference type="InterPro" id="IPR008145">
    <property type="entry name" value="GK/Ca_channel_bsu"/>
</dbReference>
<dbReference type="InterPro" id="IPR008144">
    <property type="entry name" value="Guanylate_kin-like_dom"/>
</dbReference>
<dbReference type="InterPro" id="IPR017665">
    <property type="entry name" value="Guanylate_kinase"/>
</dbReference>
<dbReference type="InterPro" id="IPR020590">
    <property type="entry name" value="Guanylate_kinase_CS"/>
</dbReference>
<dbReference type="InterPro" id="IPR027417">
    <property type="entry name" value="P-loop_NTPase"/>
</dbReference>
<dbReference type="NCBIfam" id="TIGR03263">
    <property type="entry name" value="guanyl_kin"/>
    <property type="match status" value="1"/>
</dbReference>
<dbReference type="PANTHER" id="PTHR23117:SF13">
    <property type="entry name" value="GUANYLATE KINASE"/>
    <property type="match status" value="1"/>
</dbReference>
<dbReference type="PANTHER" id="PTHR23117">
    <property type="entry name" value="GUANYLATE KINASE-RELATED"/>
    <property type="match status" value="1"/>
</dbReference>
<dbReference type="Pfam" id="PF00625">
    <property type="entry name" value="Guanylate_kin"/>
    <property type="match status" value="1"/>
</dbReference>
<dbReference type="SMART" id="SM00072">
    <property type="entry name" value="GuKc"/>
    <property type="match status" value="1"/>
</dbReference>
<dbReference type="SUPFAM" id="SSF52540">
    <property type="entry name" value="P-loop containing nucleoside triphosphate hydrolases"/>
    <property type="match status" value="1"/>
</dbReference>
<dbReference type="PROSITE" id="PS00856">
    <property type="entry name" value="GUANYLATE_KINASE_1"/>
    <property type="match status" value="1"/>
</dbReference>
<dbReference type="PROSITE" id="PS50052">
    <property type="entry name" value="GUANYLATE_KINASE_2"/>
    <property type="match status" value="1"/>
</dbReference>
<organism>
    <name type="scientific">Shouchella clausii (strain KSM-K16)</name>
    <name type="common">Alkalihalobacillus clausii</name>
    <dbReference type="NCBI Taxonomy" id="66692"/>
    <lineage>
        <taxon>Bacteria</taxon>
        <taxon>Bacillati</taxon>
        <taxon>Bacillota</taxon>
        <taxon>Bacilli</taxon>
        <taxon>Bacillales</taxon>
        <taxon>Bacillaceae</taxon>
        <taxon>Shouchella</taxon>
    </lineage>
</organism>
<comment type="function">
    <text evidence="1">Essential for recycling GMP and indirectly, cGMP.</text>
</comment>
<comment type="catalytic activity">
    <reaction evidence="1">
        <text>GMP + ATP = GDP + ADP</text>
        <dbReference type="Rhea" id="RHEA:20780"/>
        <dbReference type="ChEBI" id="CHEBI:30616"/>
        <dbReference type="ChEBI" id="CHEBI:58115"/>
        <dbReference type="ChEBI" id="CHEBI:58189"/>
        <dbReference type="ChEBI" id="CHEBI:456216"/>
        <dbReference type="EC" id="2.7.4.8"/>
    </reaction>
</comment>
<comment type="subcellular location">
    <subcellularLocation>
        <location evidence="1">Cytoplasm</location>
    </subcellularLocation>
</comment>
<comment type="similarity">
    <text evidence="1">Belongs to the guanylate kinase family.</text>
</comment>
<protein>
    <recommendedName>
        <fullName evidence="1">Guanylate kinase</fullName>
        <ecNumber evidence="1">2.7.4.8</ecNumber>
    </recommendedName>
    <alternativeName>
        <fullName evidence="1">GMP kinase</fullName>
    </alternativeName>
</protein>
<name>KGUA_SHOC1</name>
<sequence>MKREKGLLIVLSGPAGVGKGTVCGALRNQNTAIEYSVSATTRKPREGEKHGVNYFFKTREQFEQMIEDGKLLEWAEYVGNYYGTPIDYVQETINAGKDIILEIEVQGAQKVRTVFPEGVFIFLAPPSLKELRDRIVGRGTETEDIINERMTVAKEEIDLMTMYDYVVENDKVEWAVERIKAIVTAEHCKRERLIKKYKELVEVEK</sequence>
<evidence type="ECO:0000255" key="1">
    <source>
        <dbReference type="HAMAP-Rule" id="MF_00328"/>
    </source>
</evidence>
<accession>Q5WFK3</accession>
<proteinExistence type="inferred from homology"/>
<reference key="1">
    <citation type="submission" date="2003-10" db="EMBL/GenBank/DDBJ databases">
        <title>The complete genome sequence of the alkaliphilic Bacillus clausii KSM-K16.</title>
        <authorList>
            <person name="Takaki Y."/>
            <person name="Kageyama Y."/>
            <person name="Shimamura S."/>
            <person name="Suzuki H."/>
            <person name="Nishi S."/>
            <person name="Hatada Y."/>
            <person name="Kawai S."/>
            <person name="Ito S."/>
            <person name="Horikoshi K."/>
        </authorList>
    </citation>
    <scope>NUCLEOTIDE SEQUENCE [LARGE SCALE GENOMIC DNA]</scope>
    <source>
        <strain>KSM-K16</strain>
    </source>
</reference>
<keyword id="KW-0067">ATP-binding</keyword>
<keyword id="KW-0963">Cytoplasm</keyword>
<keyword id="KW-0418">Kinase</keyword>
<keyword id="KW-0547">Nucleotide-binding</keyword>
<keyword id="KW-1185">Reference proteome</keyword>
<keyword id="KW-0808">Transferase</keyword>